<proteinExistence type="inferred from homology"/>
<name>TIG_BORT9</name>
<dbReference type="EC" id="5.2.1.8" evidence="1"/>
<dbReference type="EMBL" id="CP000049">
    <property type="protein sequence ID" value="AAX17931.1"/>
    <property type="molecule type" value="Genomic_DNA"/>
</dbReference>
<dbReference type="RefSeq" id="WP_011772549.1">
    <property type="nucleotide sequence ID" value="NZ_CP073176.1"/>
</dbReference>
<dbReference type="SMR" id="A1R039"/>
<dbReference type="KEGG" id="btu:BT0610"/>
<dbReference type="eggNOG" id="COG0544">
    <property type="taxonomic scope" value="Bacteria"/>
</dbReference>
<dbReference type="HOGENOM" id="CLU_033058_0_0_12"/>
<dbReference type="Proteomes" id="UP000001205">
    <property type="component" value="Chromosome"/>
</dbReference>
<dbReference type="GO" id="GO:0005737">
    <property type="term" value="C:cytoplasm"/>
    <property type="evidence" value="ECO:0007669"/>
    <property type="project" value="UniProtKB-SubCell"/>
</dbReference>
<dbReference type="GO" id="GO:0003755">
    <property type="term" value="F:peptidyl-prolyl cis-trans isomerase activity"/>
    <property type="evidence" value="ECO:0007669"/>
    <property type="project" value="UniProtKB-UniRule"/>
</dbReference>
<dbReference type="GO" id="GO:0044183">
    <property type="term" value="F:protein folding chaperone"/>
    <property type="evidence" value="ECO:0007669"/>
    <property type="project" value="TreeGrafter"/>
</dbReference>
<dbReference type="GO" id="GO:0043022">
    <property type="term" value="F:ribosome binding"/>
    <property type="evidence" value="ECO:0007669"/>
    <property type="project" value="TreeGrafter"/>
</dbReference>
<dbReference type="GO" id="GO:0051083">
    <property type="term" value="P:'de novo' cotranslational protein folding"/>
    <property type="evidence" value="ECO:0007669"/>
    <property type="project" value="TreeGrafter"/>
</dbReference>
<dbReference type="GO" id="GO:0051301">
    <property type="term" value="P:cell division"/>
    <property type="evidence" value="ECO:0007669"/>
    <property type="project" value="UniProtKB-KW"/>
</dbReference>
<dbReference type="GO" id="GO:0061077">
    <property type="term" value="P:chaperone-mediated protein folding"/>
    <property type="evidence" value="ECO:0007669"/>
    <property type="project" value="TreeGrafter"/>
</dbReference>
<dbReference type="GO" id="GO:0015031">
    <property type="term" value="P:protein transport"/>
    <property type="evidence" value="ECO:0007669"/>
    <property type="project" value="UniProtKB-UniRule"/>
</dbReference>
<dbReference type="GO" id="GO:0043335">
    <property type="term" value="P:protein unfolding"/>
    <property type="evidence" value="ECO:0007669"/>
    <property type="project" value="TreeGrafter"/>
</dbReference>
<dbReference type="Gene3D" id="3.10.50.40">
    <property type="match status" value="1"/>
</dbReference>
<dbReference type="Gene3D" id="3.30.70.1050">
    <property type="entry name" value="Trigger factor ribosome-binding domain"/>
    <property type="match status" value="1"/>
</dbReference>
<dbReference type="Gene3D" id="1.10.3120.10">
    <property type="entry name" value="Trigger factor, C-terminal domain"/>
    <property type="match status" value="1"/>
</dbReference>
<dbReference type="HAMAP" id="MF_00303">
    <property type="entry name" value="Trigger_factor_Tig"/>
    <property type="match status" value="1"/>
</dbReference>
<dbReference type="InterPro" id="IPR046357">
    <property type="entry name" value="PPIase_dom_sf"/>
</dbReference>
<dbReference type="InterPro" id="IPR005215">
    <property type="entry name" value="Trig_fac"/>
</dbReference>
<dbReference type="InterPro" id="IPR008880">
    <property type="entry name" value="Trigger_fac_C"/>
</dbReference>
<dbReference type="InterPro" id="IPR037041">
    <property type="entry name" value="Trigger_fac_C_sf"/>
</dbReference>
<dbReference type="InterPro" id="IPR008881">
    <property type="entry name" value="Trigger_fac_ribosome-bd_bac"/>
</dbReference>
<dbReference type="InterPro" id="IPR036611">
    <property type="entry name" value="Trigger_fac_ribosome-bd_sf"/>
</dbReference>
<dbReference type="InterPro" id="IPR027304">
    <property type="entry name" value="Trigger_fact/SurA_dom_sf"/>
</dbReference>
<dbReference type="NCBIfam" id="TIGR00115">
    <property type="entry name" value="tig"/>
    <property type="match status" value="1"/>
</dbReference>
<dbReference type="PANTHER" id="PTHR30560">
    <property type="entry name" value="TRIGGER FACTOR CHAPERONE AND PEPTIDYL-PROLYL CIS/TRANS ISOMERASE"/>
    <property type="match status" value="1"/>
</dbReference>
<dbReference type="PANTHER" id="PTHR30560:SF3">
    <property type="entry name" value="TRIGGER FACTOR-LIKE PROTEIN TIG, CHLOROPLASTIC"/>
    <property type="match status" value="1"/>
</dbReference>
<dbReference type="Pfam" id="PF05698">
    <property type="entry name" value="Trigger_C"/>
    <property type="match status" value="1"/>
</dbReference>
<dbReference type="Pfam" id="PF05697">
    <property type="entry name" value="Trigger_N"/>
    <property type="match status" value="1"/>
</dbReference>
<dbReference type="PIRSF" id="PIRSF003095">
    <property type="entry name" value="Trigger_factor"/>
    <property type="match status" value="1"/>
</dbReference>
<dbReference type="SUPFAM" id="SSF54534">
    <property type="entry name" value="FKBP-like"/>
    <property type="match status" value="1"/>
</dbReference>
<dbReference type="SUPFAM" id="SSF109998">
    <property type="entry name" value="Triger factor/SurA peptide-binding domain-like"/>
    <property type="match status" value="1"/>
</dbReference>
<dbReference type="SUPFAM" id="SSF102735">
    <property type="entry name" value="Trigger factor ribosome-binding domain"/>
    <property type="match status" value="1"/>
</dbReference>
<evidence type="ECO:0000255" key="1">
    <source>
        <dbReference type="HAMAP-Rule" id="MF_00303"/>
    </source>
</evidence>
<protein>
    <recommendedName>
        <fullName evidence="1">Trigger factor</fullName>
        <shortName evidence="1">TF</shortName>
        <ecNumber evidence="1">5.2.1.8</ecNumber>
    </recommendedName>
    <alternativeName>
        <fullName evidence="1">PPIase</fullName>
    </alternativeName>
</protein>
<sequence length="448" mass="51920">MILNNDVKLIPGSKVEAVIRISKKFVKSKYNEILQDYSSRLKVKGFRIGKVPFSIIEGKYSDNIRALTIEKLIHKSLEEFFKSATYKPLGYAVPKILDEKLEIDFSKDFEFTVVYEAYPEFELPDISNVEVEIPEVFVSDSDVEEELKLLQLENAIVVEDSGDVKSGSIVRVDFVELDDSLSEILTTKRQDFVFTVGESNNYYGFDNDIIGMKKDEEKIVEKNYGMDYKFSELANSFKRLKISLKDIKRRDIPKLDDDFAKDIKDSFNTLEDLKEHIRENMLRLVKERSESLKLSKLLSDIAEKLNIEIPSSMFEAEFKNVLNEFSHQNKINLEQLSNSSTGLEGINDVFKENVLKKLKSKLIFQKIVDNDLTEVTDSDLEDELVKQAEDAKMKLADIKKFYQEKNLLEILKDEIKRQKVKDKILKNVKEINPKKVAFRDFINYKTGE</sequence>
<comment type="function">
    <text evidence="1">Involved in protein export. Acts as a chaperone by maintaining the newly synthesized protein in an open conformation. Functions as a peptidyl-prolyl cis-trans isomerase.</text>
</comment>
<comment type="catalytic activity">
    <reaction evidence="1">
        <text>[protein]-peptidylproline (omega=180) = [protein]-peptidylproline (omega=0)</text>
        <dbReference type="Rhea" id="RHEA:16237"/>
        <dbReference type="Rhea" id="RHEA-COMP:10747"/>
        <dbReference type="Rhea" id="RHEA-COMP:10748"/>
        <dbReference type="ChEBI" id="CHEBI:83833"/>
        <dbReference type="ChEBI" id="CHEBI:83834"/>
        <dbReference type="EC" id="5.2.1.8"/>
    </reaction>
</comment>
<comment type="subcellular location">
    <subcellularLocation>
        <location>Cytoplasm</location>
    </subcellularLocation>
    <text evidence="1">About half TF is bound to the ribosome near the polypeptide exit tunnel while the other half is free in the cytoplasm.</text>
</comment>
<comment type="domain">
    <text evidence="1">Consists of 3 domains; the N-terminus binds the ribosome, the middle domain has PPIase activity, while the C-terminus has intrinsic chaperone activity on its own.</text>
</comment>
<comment type="similarity">
    <text evidence="1">Belongs to the FKBP-type PPIase family. Tig subfamily.</text>
</comment>
<gene>
    <name evidence="1" type="primary">tig</name>
    <name type="ordered locus">BT0610</name>
</gene>
<organism>
    <name type="scientific">Borrelia turicatae (strain 91E135)</name>
    <dbReference type="NCBI Taxonomy" id="314724"/>
    <lineage>
        <taxon>Bacteria</taxon>
        <taxon>Pseudomonadati</taxon>
        <taxon>Spirochaetota</taxon>
        <taxon>Spirochaetia</taxon>
        <taxon>Spirochaetales</taxon>
        <taxon>Borreliaceae</taxon>
        <taxon>Borrelia</taxon>
    </lineage>
</organism>
<feature type="chain" id="PRO_1000198145" description="Trigger factor">
    <location>
        <begin position="1"/>
        <end position="448"/>
    </location>
</feature>
<feature type="domain" description="PPIase FKBP-type" evidence="1">
    <location>
        <begin position="167"/>
        <end position="253"/>
    </location>
</feature>
<reference key="1">
    <citation type="submission" date="2004-12" db="EMBL/GenBank/DDBJ databases">
        <title>The genome sequence of Borrelia hermsii and Borrelia turicatae: comparative analysis of two agents of endemic N. America relapsing fever.</title>
        <authorList>
            <person name="Porcella S.F."/>
            <person name="Raffel S.J."/>
            <person name="Schrumpf M.E."/>
            <person name="Montgomery B."/>
            <person name="Smith T."/>
            <person name="Schwan T.G."/>
        </authorList>
    </citation>
    <scope>NUCLEOTIDE SEQUENCE [LARGE SCALE GENOMIC DNA]</scope>
    <source>
        <strain>91E135</strain>
    </source>
</reference>
<accession>A1R039</accession>
<keyword id="KW-0131">Cell cycle</keyword>
<keyword id="KW-0132">Cell division</keyword>
<keyword id="KW-0143">Chaperone</keyword>
<keyword id="KW-0963">Cytoplasm</keyword>
<keyword id="KW-0413">Isomerase</keyword>
<keyword id="KW-1185">Reference proteome</keyword>
<keyword id="KW-0697">Rotamase</keyword>